<proteinExistence type="inferred from homology"/>
<comment type="function">
    <text evidence="1">During virus replication, may deplete host UNG protein, and incude G2-M cell cycle arrest. Acts by targeting specific host proteins for degradation by the 26S proteasome, through association with the cellular CUL4A-DDB1 E3 ligase complex by direct interaction with host VPRPB/DCAF-1. Cell cycle arrest reportedly occurs within hours of infection and is not blocked by antiviral agents, suggesting that it is initiated by the VPR carried into the virion. Additionally, VPR induces apoptosis in a cell cycle dependent manner suggesting that these two effects are mechanistically linked. Detected in the serum and cerebrospinal fluid of AIDS patient, VPR may also induce cell death to bystander cells.</text>
</comment>
<comment type="function">
    <text evidence="1">During virus entry, plays a role in the transport of the viral pre-integration (PIC) complex to the host nucleus. This function is crucial for viral infection of non-dividing macrophages. May act directly at the nuclear pore complex, by binding nucleoporins phenylalanine-glycine (FG)-repeat regions.</text>
</comment>
<comment type="subunit">
    <text evidence="1">Homooligomer, may form homodimer. Interacts with p6-gag region of the Pr55 Gag precursor protein through a (Leu-X-X)4 motif near the C-terminus of the P6gag protein. Interacts with host UNG. May interact with host RAD23A/HHR23A. Interacts with host VPRBP/DCAF1, leading to hijack the CUL4A-RBX1-DDB1-DCAF1/VPRBP complex, mediating ubiquitination of host proteins such as TERT and ZGPAT and arrest of the cell cycle in G2 phase.</text>
</comment>
<comment type="subcellular location">
    <subcellularLocation>
        <location evidence="1">Virion</location>
    </subcellularLocation>
    <subcellularLocation>
        <location evidence="1">Host nucleus</location>
    </subcellularLocation>
    <subcellularLocation>
        <location evidence="1">Host extracellular space</location>
    </subcellularLocation>
    <text evidence="1">Incorporation into virion is dependent on p6 GAG sequences. Lacks a canonical nuclear localization signal, thus import into nucleus may function independently of the human importin pathway. Detected in high quantity in the serum and cerebrospinal fluid of AIDS patient.</text>
</comment>
<comment type="PTM">
    <text evidence="1">Phosphorylated on several residues by host. These phosphorylations regulate VPR activity for the nuclear import of the HIV-1 pre-integration complex.</text>
</comment>
<comment type="miscellaneous">
    <text evidence="1">HIV-1 lineages are divided in three main groups, M (for Major), O (for Outlier), and N (for New, or Non-M, Non-O). The vast majority of strains found worldwide belong to the group M. Group O seems to be endemic to and largely confined to Cameroon and neighboring countries in West Central Africa, where these viruses represent a small minority of HIV-1 strains. The group N is represented by a limited number of isolates from Cameroonian persons. The group M is further subdivided in 9 clades or subtypes (A to D, F to H, J and K).</text>
</comment>
<comment type="similarity">
    <text evidence="1">Belongs to the HIV-1 VPR protein family.</text>
</comment>
<feature type="chain" id="PRO_0000085447" description="Protein Vpr">
    <location>
        <begin position="1"/>
        <end position="96"/>
    </location>
</feature>
<feature type="region of interest" description="Homooligomerization" evidence="1">
    <location>
        <begin position="1"/>
        <end position="42"/>
    </location>
</feature>
<feature type="modified residue" description="Phosphoserine; by host" evidence="1">
    <location>
        <position position="79"/>
    </location>
</feature>
<feature type="modified residue" description="Phosphoserine; by host" evidence="1">
    <location>
        <position position="94"/>
    </location>
</feature>
<feature type="modified residue" description="Phosphoserine; by host" evidence="1">
    <location>
        <position position="96"/>
    </location>
</feature>
<sequence length="96" mass="11494">MEQAPEDQGPQREPYNEWTLELLEELKSEAVRHFPRIWLHSLEQYIYETYGDTWEGVEAIIRILQQLLFIHFRIGCQHSRIGITRQRRARNGASRS</sequence>
<keyword id="KW-0010">Activator</keyword>
<keyword id="KW-0014">AIDS</keyword>
<keyword id="KW-0053">Apoptosis</keyword>
<keyword id="KW-0131">Cell cycle</keyword>
<keyword id="KW-1079">Host G2/M cell cycle arrest by virus</keyword>
<keyword id="KW-1048">Host nucleus</keyword>
<keyword id="KW-0945">Host-virus interaction</keyword>
<keyword id="KW-0407">Ion channel</keyword>
<keyword id="KW-0406">Ion transport</keyword>
<keyword id="KW-1121">Modulation of host cell cycle by virus</keyword>
<keyword id="KW-0597">Phosphoprotein</keyword>
<keyword id="KW-0804">Transcription</keyword>
<keyword id="KW-0805">Transcription regulation</keyword>
<keyword id="KW-0813">Transport</keyword>
<keyword id="KW-1163">Viral penetration into host nucleus</keyword>
<keyword id="KW-0946">Virion</keyword>
<keyword id="KW-1160">Virus entry into host cell</keyword>
<accession>P20891</accession>
<reference key="1">
    <citation type="journal article" date="1989" name="AIDS">
        <title>A highly defective HIV-1 strain isolated from a healthy Gabonese individual presenting an atypical western blot.</title>
        <authorList>
            <person name="Huet T."/>
            <person name="Dazza M.C."/>
            <person name="Brun-Vezinet F."/>
            <person name="Roelants G.E."/>
            <person name="Wain-Hobson S."/>
        </authorList>
    </citation>
    <scope>NUCLEOTIDE SEQUENCE [GENOMIC RNA]</scope>
</reference>
<organismHost>
    <name type="scientific">Homo sapiens</name>
    <name type="common">Human</name>
    <dbReference type="NCBI Taxonomy" id="9606"/>
</organismHost>
<name>VPR_HV1OY</name>
<dbReference type="EMBL" id="M26727">
    <property type="protein sequence ID" value="AAA83394.1"/>
    <property type="molecule type" value="Genomic_RNA"/>
</dbReference>
<dbReference type="SMR" id="P20891"/>
<dbReference type="Proteomes" id="UP000121275">
    <property type="component" value="Genome"/>
</dbReference>
<dbReference type="GO" id="GO:0043657">
    <property type="term" value="C:host cell"/>
    <property type="evidence" value="ECO:0007669"/>
    <property type="project" value="GOC"/>
</dbReference>
<dbReference type="GO" id="GO:0042025">
    <property type="term" value="C:host cell nucleus"/>
    <property type="evidence" value="ECO:0007669"/>
    <property type="project" value="UniProtKB-SubCell"/>
</dbReference>
<dbReference type="GO" id="GO:0043655">
    <property type="term" value="C:host extracellular space"/>
    <property type="evidence" value="ECO:0007669"/>
    <property type="project" value="UniProtKB-SubCell"/>
</dbReference>
<dbReference type="GO" id="GO:0044423">
    <property type="term" value="C:virion component"/>
    <property type="evidence" value="ECO:0007669"/>
    <property type="project" value="UniProtKB-UniRule"/>
</dbReference>
<dbReference type="GO" id="GO:0006351">
    <property type="term" value="P:DNA-templated transcription"/>
    <property type="evidence" value="ECO:0007669"/>
    <property type="project" value="UniProtKB-UniRule"/>
</dbReference>
<dbReference type="GO" id="GO:0034220">
    <property type="term" value="P:monoatomic ion transmembrane transport"/>
    <property type="evidence" value="ECO:0007669"/>
    <property type="project" value="UniProtKB-KW"/>
</dbReference>
<dbReference type="GO" id="GO:0051260">
    <property type="term" value="P:protein homooligomerization"/>
    <property type="evidence" value="ECO:0007669"/>
    <property type="project" value="UniProtKB-UniRule"/>
</dbReference>
<dbReference type="GO" id="GO:0006355">
    <property type="term" value="P:regulation of DNA-templated transcription"/>
    <property type="evidence" value="ECO:0007669"/>
    <property type="project" value="UniProtKB-UniRule"/>
</dbReference>
<dbReference type="GO" id="GO:0046718">
    <property type="term" value="P:symbiont entry into host cell"/>
    <property type="evidence" value="ECO:0007669"/>
    <property type="project" value="UniProtKB-KW"/>
</dbReference>
<dbReference type="GO" id="GO:0052151">
    <property type="term" value="P:symbiont-mediated activation of host apoptosis"/>
    <property type="evidence" value="ECO:0007669"/>
    <property type="project" value="UniProtKB-UniRule"/>
</dbReference>
<dbReference type="GO" id="GO:0039592">
    <property type="term" value="P:symbiont-mediated arrest of host cell cycle during G2/M transition"/>
    <property type="evidence" value="ECO:0007669"/>
    <property type="project" value="UniProtKB-UniRule"/>
</dbReference>
<dbReference type="GO" id="GO:0075732">
    <property type="term" value="P:viral penetration into host nucleus"/>
    <property type="evidence" value="ECO:0007669"/>
    <property type="project" value="UniProtKB-UniRule"/>
</dbReference>
<dbReference type="FunFam" id="1.20.5.90:FF:000001">
    <property type="entry name" value="Protein Vpr"/>
    <property type="match status" value="1"/>
</dbReference>
<dbReference type="Gene3D" id="6.10.210.10">
    <property type="match status" value="1"/>
</dbReference>
<dbReference type="Gene3D" id="1.20.5.90">
    <property type="entry name" value="VpR/VpX protein, C-terminal domain"/>
    <property type="match status" value="1"/>
</dbReference>
<dbReference type="HAMAP" id="MF_04080">
    <property type="entry name" value="HIV_VPR"/>
    <property type="match status" value="1"/>
</dbReference>
<dbReference type="InterPro" id="IPR000012">
    <property type="entry name" value="RetroV_VpR/X"/>
</dbReference>
<dbReference type="Pfam" id="PF00522">
    <property type="entry name" value="VPR"/>
    <property type="match status" value="1"/>
</dbReference>
<dbReference type="PRINTS" id="PR00444">
    <property type="entry name" value="HIVVPRVPX"/>
</dbReference>
<organism>
    <name type="scientific">Human immunodeficiency virus type 1 group M subtype B (isolate OYI)</name>
    <name type="common">HIV-1</name>
    <dbReference type="NCBI Taxonomy" id="11699"/>
    <lineage>
        <taxon>Viruses</taxon>
        <taxon>Riboviria</taxon>
        <taxon>Pararnavirae</taxon>
        <taxon>Artverviricota</taxon>
        <taxon>Revtraviricetes</taxon>
        <taxon>Ortervirales</taxon>
        <taxon>Retroviridae</taxon>
        <taxon>Orthoretrovirinae</taxon>
        <taxon>Lentivirus</taxon>
        <taxon>Human immunodeficiency virus type 1</taxon>
    </lineage>
</organism>
<evidence type="ECO:0000255" key="1">
    <source>
        <dbReference type="HAMAP-Rule" id="MF_04080"/>
    </source>
</evidence>
<gene>
    <name evidence="1" type="primary">vpr</name>
</gene>
<protein>
    <recommendedName>
        <fullName evidence="1">Protein Vpr</fullName>
    </recommendedName>
    <alternativeName>
        <fullName evidence="1">R ORF protein</fullName>
    </alternativeName>
    <alternativeName>
        <fullName evidence="1">Viral protein R</fullName>
    </alternativeName>
</protein>